<comment type="function">
    <text>Shows particularly broad specificity; although bonds involving phenylalanine and leucine are preferred, many others are also cleaved to some extent.</text>
</comment>
<comment type="catalytic activity">
    <reaction evidence="4">
        <text>Preferential cleavage: hydrophobic, preferably aromatic, residues in P1 and P1' positions. Cleaves 1-Phe-|-Val-2, 4-Gln-|-His-5, 13-Glu-|-Ala-14, 14-Ala-|-Leu-15, 15-Leu-|-Tyr-16, 16-Tyr-|-Leu-17, 23-Gly-|-Phe-24, 24-Phe-|-Phe-25 and 25-Phe-|-Tyr-26 bonds in the B chain of insulin.</text>
        <dbReference type="EC" id="3.4.23.1"/>
    </reaction>
</comment>
<comment type="subcellular location">
    <subcellularLocation>
        <location>Secreted</location>
    </subcellularLocation>
</comment>
<comment type="developmental stage">
    <text>Pepsin A-2 is predominant at the 4-month stage. Pepsin A-3 is predominant at fetal stages.</text>
</comment>
<comment type="PTM">
    <text evidence="5">Pepsin A-2 is phosphorylated, but not pepsin A-3.</text>
</comment>
<comment type="PTM">
    <text>Each pepsinogen is converted to corresponding pepsin at pH 2.0 in part as a result of the release of a 47 AA activation segment and in part as a result of stepwise proteolytic cleavage via an intermediate form(s).</text>
</comment>
<comment type="miscellaneous">
    <text>The expression of pepsinogen genes is regulated by hormones and related substances.</text>
</comment>
<comment type="similarity">
    <text evidence="6">Belongs to the peptidase A1 family.</text>
</comment>
<comment type="caution">
    <text evidence="6">It is not known if this is Pep A-2 or Pep A-3.</text>
</comment>
<keyword id="KW-0064">Aspartyl protease</keyword>
<keyword id="KW-0222">Digestion</keyword>
<keyword id="KW-0903">Direct protein sequencing</keyword>
<keyword id="KW-1015">Disulfide bond</keyword>
<keyword id="KW-0378">Hydrolase</keyword>
<keyword id="KW-0597">Phosphoprotein</keyword>
<keyword id="KW-0645">Protease</keyword>
<keyword id="KW-0964">Secreted</keyword>
<keyword id="KW-0732">Signal</keyword>
<keyword id="KW-0865">Zymogen</keyword>
<dbReference type="EC" id="3.4.23.1"/>
<dbReference type="EMBL" id="X59755">
    <property type="protein sequence ID" value="CAA42427.1"/>
    <property type="molecule type" value="mRNA"/>
</dbReference>
<dbReference type="PIR" id="S19684">
    <property type="entry name" value="S19684"/>
</dbReference>
<dbReference type="SMR" id="P27677"/>
<dbReference type="MEROPS" id="A01.001"/>
<dbReference type="GO" id="GO:0070062">
    <property type="term" value="C:extracellular exosome"/>
    <property type="evidence" value="ECO:0007669"/>
    <property type="project" value="TreeGrafter"/>
</dbReference>
<dbReference type="GO" id="GO:0004190">
    <property type="term" value="F:aspartic-type endopeptidase activity"/>
    <property type="evidence" value="ECO:0007669"/>
    <property type="project" value="UniProtKB-KW"/>
</dbReference>
<dbReference type="GO" id="GO:0007586">
    <property type="term" value="P:digestion"/>
    <property type="evidence" value="ECO:0007669"/>
    <property type="project" value="UniProtKB-KW"/>
</dbReference>
<dbReference type="GO" id="GO:0006508">
    <property type="term" value="P:proteolysis"/>
    <property type="evidence" value="ECO:0007669"/>
    <property type="project" value="UniProtKB-KW"/>
</dbReference>
<dbReference type="CDD" id="cd05478">
    <property type="entry name" value="pepsin_A"/>
    <property type="match status" value="1"/>
</dbReference>
<dbReference type="FunFam" id="2.40.70.10:FF:000006">
    <property type="entry name" value="Cathepsin E"/>
    <property type="match status" value="1"/>
</dbReference>
<dbReference type="FunFam" id="2.40.70.10:FF:000004">
    <property type="entry name" value="Pepsin A"/>
    <property type="match status" value="1"/>
</dbReference>
<dbReference type="Gene3D" id="6.10.140.60">
    <property type="match status" value="1"/>
</dbReference>
<dbReference type="Gene3D" id="2.40.70.10">
    <property type="entry name" value="Acid Proteases"/>
    <property type="match status" value="2"/>
</dbReference>
<dbReference type="InterPro" id="IPR001461">
    <property type="entry name" value="Aspartic_peptidase_A1"/>
</dbReference>
<dbReference type="InterPro" id="IPR001969">
    <property type="entry name" value="Aspartic_peptidase_AS"/>
</dbReference>
<dbReference type="InterPro" id="IPR012848">
    <property type="entry name" value="Aspartic_peptidase_N"/>
</dbReference>
<dbReference type="InterPro" id="IPR034162">
    <property type="entry name" value="Pepsin_A"/>
</dbReference>
<dbReference type="InterPro" id="IPR033121">
    <property type="entry name" value="PEPTIDASE_A1"/>
</dbReference>
<dbReference type="InterPro" id="IPR021109">
    <property type="entry name" value="Peptidase_aspartic_dom_sf"/>
</dbReference>
<dbReference type="PANTHER" id="PTHR47966">
    <property type="entry name" value="BETA-SITE APP-CLEAVING ENZYME, ISOFORM A-RELATED"/>
    <property type="match status" value="1"/>
</dbReference>
<dbReference type="PANTHER" id="PTHR47966:SF22">
    <property type="entry name" value="PEPSIN A-3-RELATED"/>
    <property type="match status" value="1"/>
</dbReference>
<dbReference type="Pfam" id="PF07966">
    <property type="entry name" value="A1_Propeptide"/>
    <property type="match status" value="1"/>
</dbReference>
<dbReference type="Pfam" id="PF00026">
    <property type="entry name" value="Asp"/>
    <property type="match status" value="1"/>
</dbReference>
<dbReference type="PRINTS" id="PR00792">
    <property type="entry name" value="PEPSIN"/>
</dbReference>
<dbReference type="SUPFAM" id="SSF50630">
    <property type="entry name" value="Acid proteases"/>
    <property type="match status" value="1"/>
</dbReference>
<dbReference type="PROSITE" id="PS00141">
    <property type="entry name" value="ASP_PROTEASE"/>
    <property type="match status" value="2"/>
</dbReference>
<dbReference type="PROSITE" id="PS51767">
    <property type="entry name" value="PEPTIDASE_A1"/>
    <property type="match status" value="1"/>
</dbReference>
<accession>P27677</accession>
<sequence length="388" mass="41704">MKWLLLLGLVALSECIIHKVPLVRKKSLRRNLSEHGLLKDFLKKHNFNPASKYFPQAEAPTLIDEQPLENYLDMEYFGTIGIGTPAQDFTVIFDTGSSNLWVPSVYCSSLACTNHNRFNPQDSSTYQSTSGTVSITYGTGSMTGILGYDTVQVGGISDTNQIFGLSETEPGSFLYYAPFDGILGLAYPSISSSGATPVFDNIWNQGLVSQDLFSVYLSADDQSGSVVIFGGIDSSYYTGSLNWVPVSVEGYWQISVDSITMNGEAIACAEGCQAIVDTGTSLLTGPTSPIANIQSDIGASENSDGEMVVSCSAISSLPDIVFTINGIQYPVPPSAYILQSQGSCISGFQGMDVPTESGELWILGDVFIRQYFTVFDRANNQVGLAPVA</sequence>
<evidence type="ECO:0000250" key="1"/>
<evidence type="ECO:0000250" key="2">
    <source>
        <dbReference type="UniProtKB" id="P03954"/>
    </source>
</evidence>
<evidence type="ECO:0000255" key="3">
    <source>
        <dbReference type="PROSITE-ProRule" id="PRU01103"/>
    </source>
</evidence>
<evidence type="ECO:0000255" key="4">
    <source>
        <dbReference type="PROSITE-ProRule" id="PRU10094"/>
    </source>
</evidence>
<evidence type="ECO:0000269" key="5">
    <source>
    </source>
</evidence>
<evidence type="ECO:0000305" key="6"/>
<name>PEPA2_MACFU</name>
<proteinExistence type="evidence at protein level"/>
<reference key="1">
    <citation type="journal article" date="1991" name="Eur. J. Biochem.">
        <title>Development-dependent expression of isozymogens of monkey pepsinogens and structural differences between them.</title>
        <authorList>
            <person name="Kageyama T."/>
            <person name="Tanabe K."/>
            <person name="Koiwai O."/>
        </authorList>
    </citation>
    <scope>NUCLEOTIDE SEQUENCE [MRNA]</scope>
    <scope>PROTEIN SEQUENCE OF 16-70</scope>
    <scope>PHOSPHORYLATION</scope>
    <source>
        <tissue>Gastric mucosa</tissue>
    </source>
</reference>
<feature type="signal peptide" evidence="1">
    <location>
        <begin position="1"/>
        <end position="15"/>
    </location>
</feature>
<feature type="propeptide" id="PRO_0000026018" description="Activation peptide">
    <location>
        <begin position="16"/>
        <end position="40"/>
    </location>
</feature>
<feature type="propeptide" id="PRO_0000026019" description="Activation peptide">
    <location>
        <begin position="41"/>
        <end position="62"/>
    </location>
</feature>
<feature type="chain" id="PRO_0000026020" description="Pepsin A-2/A-3">
    <location>
        <begin position="63"/>
        <end position="388"/>
    </location>
</feature>
<feature type="domain" description="Peptidase A1" evidence="3">
    <location>
        <begin position="76"/>
        <end position="385"/>
    </location>
</feature>
<feature type="active site" evidence="4">
    <location>
        <position position="94"/>
    </location>
</feature>
<feature type="active site" evidence="4">
    <location>
        <position position="277"/>
    </location>
</feature>
<feature type="modified residue" description="Phosphoserine" evidence="2">
    <location>
        <position position="130"/>
    </location>
</feature>
<feature type="disulfide bond" evidence="1">
    <location>
        <begin position="107"/>
        <end position="112"/>
    </location>
</feature>
<feature type="disulfide bond" evidence="1">
    <location>
        <begin position="268"/>
        <end position="272"/>
    </location>
</feature>
<feature type="disulfide bond" evidence="1">
    <location>
        <begin position="311"/>
        <end position="344"/>
    </location>
</feature>
<protein>
    <recommendedName>
        <fullName>Pepsin A-2/A-3</fullName>
        <ecNumber>3.4.23.1</ecNumber>
    </recommendedName>
    <alternativeName>
        <fullName>Pepsin III-2/III-1</fullName>
    </alternativeName>
</protein>
<organism>
    <name type="scientific">Macaca fuscata fuscata</name>
    <name type="common">Japanese macaque</name>
    <dbReference type="NCBI Taxonomy" id="9543"/>
    <lineage>
        <taxon>Eukaryota</taxon>
        <taxon>Metazoa</taxon>
        <taxon>Chordata</taxon>
        <taxon>Craniata</taxon>
        <taxon>Vertebrata</taxon>
        <taxon>Euteleostomi</taxon>
        <taxon>Mammalia</taxon>
        <taxon>Eutheria</taxon>
        <taxon>Euarchontoglires</taxon>
        <taxon>Primates</taxon>
        <taxon>Haplorrhini</taxon>
        <taxon>Catarrhini</taxon>
        <taxon>Cercopithecidae</taxon>
        <taxon>Cercopithecinae</taxon>
        <taxon>Macaca</taxon>
    </lineage>
</organism>